<accession>B2LT48</accession>
<keyword id="KW-1003">Cell membrane</keyword>
<keyword id="KW-1015">Disulfide bond</keyword>
<keyword id="KW-0325">Glycoprotein</keyword>
<keyword id="KW-0472">Membrane</keyword>
<keyword id="KW-0552">Olfaction</keyword>
<keyword id="KW-0675">Receptor</keyword>
<keyword id="KW-0716">Sensory transduction</keyword>
<keyword id="KW-0812">Transmembrane</keyword>
<keyword id="KW-1133">Transmembrane helix</keyword>
<dbReference type="EMBL" id="EU580138">
    <property type="protein sequence ID" value="ACC61201.1"/>
    <property type="molecule type" value="mRNA"/>
</dbReference>
<dbReference type="SMR" id="B2LT48"/>
<dbReference type="GO" id="GO:0005737">
    <property type="term" value="C:cytoplasm"/>
    <property type="evidence" value="ECO:0007669"/>
    <property type="project" value="TreeGrafter"/>
</dbReference>
<dbReference type="GO" id="GO:0005886">
    <property type="term" value="C:plasma membrane"/>
    <property type="evidence" value="ECO:0007669"/>
    <property type="project" value="UniProtKB-SubCell"/>
</dbReference>
<dbReference type="GO" id="GO:0005044">
    <property type="term" value="F:scavenger receptor activity"/>
    <property type="evidence" value="ECO:0007669"/>
    <property type="project" value="TreeGrafter"/>
</dbReference>
<dbReference type="GO" id="GO:0007608">
    <property type="term" value="P:sensory perception of smell"/>
    <property type="evidence" value="ECO:0007669"/>
    <property type="project" value="UniProtKB-KW"/>
</dbReference>
<dbReference type="InterPro" id="IPR002159">
    <property type="entry name" value="CD36_fam"/>
</dbReference>
<dbReference type="PANTHER" id="PTHR11923">
    <property type="entry name" value="SCAVENGER RECEPTOR CLASS B TYPE-1 SR-B1"/>
    <property type="match status" value="1"/>
</dbReference>
<dbReference type="PANTHER" id="PTHR11923:SF69">
    <property type="entry name" value="SENSORY NEURON MEMBRANE PROTEIN 1"/>
    <property type="match status" value="1"/>
</dbReference>
<dbReference type="Pfam" id="PF01130">
    <property type="entry name" value="CD36"/>
    <property type="match status" value="1"/>
</dbReference>
<dbReference type="PRINTS" id="PR01609">
    <property type="entry name" value="CD36FAMILY"/>
</dbReference>
<evidence type="ECO:0000250" key="1">
    <source>
        <dbReference type="UniProtKB" id="O02351"/>
    </source>
</evidence>
<evidence type="ECO:0000250" key="2">
    <source>
        <dbReference type="UniProtKB" id="P26201"/>
    </source>
</evidence>
<evidence type="ECO:0000255" key="3"/>
<evidence type="ECO:0000305" key="4"/>
<evidence type="ECO:0000312" key="5">
    <source>
        <dbReference type="EMBL" id="ACC61201.1"/>
    </source>
</evidence>
<proteinExistence type="evidence at transcript level"/>
<name>SNMP1_HELAU</name>
<feature type="chain" id="PRO_0000408249" description="Sensory neuron membrane protein 1">
    <location>
        <begin position="1"/>
        <end position="523"/>
    </location>
</feature>
<feature type="topological domain" description="Cytoplasmic" evidence="3">
    <location>
        <begin position="1"/>
        <end position="11"/>
    </location>
</feature>
<feature type="transmembrane region" description="Helical" evidence="3">
    <location>
        <begin position="12"/>
        <end position="32"/>
    </location>
</feature>
<feature type="topological domain" description="Extracellular" evidence="3">
    <location>
        <begin position="33"/>
        <end position="458"/>
    </location>
</feature>
<feature type="transmembrane region" description="Helical" evidence="3">
    <location>
        <begin position="459"/>
        <end position="479"/>
    </location>
</feature>
<feature type="topological domain" description="Cytoplasmic" evidence="3">
    <location>
        <begin position="480"/>
        <end position="523"/>
    </location>
</feature>
<feature type="glycosylation site" description="N-linked (GlcNAc...) asparagine" evidence="3">
    <location>
        <position position="229"/>
    </location>
</feature>
<feature type="glycosylation site" description="N-linked (GlcNAc...) asparagine" evidence="3">
    <location>
        <position position="440"/>
    </location>
</feature>
<feature type="disulfide bond" evidence="2">
    <location>
        <begin position="268"/>
        <end position="333"/>
    </location>
</feature>
<feature type="disulfide bond" evidence="2">
    <location>
        <begin position="297"/>
        <end position="352"/>
    </location>
</feature>
<feature type="disulfide bond" evidence="2">
    <location>
        <begin position="335"/>
        <end position="341"/>
    </location>
</feature>
<comment type="function">
    <text evidence="1">Plays an olfactory role that is not restricted to pheromone sensitivity.</text>
</comment>
<comment type="subcellular location">
    <subcellularLocation>
        <location evidence="1">Cell membrane</location>
        <topology evidence="1">Multi-pass membrane protein</topology>
    </subcellularLocation>
</comment>
<comment type="similarity">
    <text evidence="4">Belongs to the CD36 family.</text>
</comment>
<sequence>MQLPRELKYAAIAGGVALFGLIFGWVLFPTILKSQLKKEMALSKKTDVRKMWEKIPFALDFKVYIFYFTNAEEVQKGATPILKEIGPYHFDEWKEKVEVEDHEEDDTITYKKRDVFYFNPEMSAPGLTGEEIVVIPHIFMLGMALTVARDKPAMLNMIGKAMNGIFDDPPDIFLRVKVLDILFRGMIINCARTEFAPKATCTALKKEGVSGLVLEPNNQFRFSIFGTRNNTIDPHVITVKRGITNVMDVGQVVAVDGKTEQTIWRDTCNEFQGTDGTVFPPFVPETERIESFSTDLCRTFKPWYQKKTSYRGIKTNRYIANIGDFANDPELNCYCSKPDTCPPKGLMDLAPCMKAPMYVSLPHFLDSDPALLTKVKGLNPDVTQHGIEIDYEPITGTPMVAKQRIQFNIQLLKTDKLDLFKDLSGDIVPLFWIDEGLSLNKTFVNMLKHQLFIPKRVVGVLRWWMVSFGSLGAVIGIVFHFRDHIMRLAVSGDTKVSKVIPEVEEQKDISVIGQAQEPAKVNI</sequence>
<protein>
    <recommendedName>
        <fullName>Sensory neuron membrane protein 1</fullName>
    </recommendedName>
</protein>
<reference evidence="5" key="1">
    <citation type="submission" date="2008-03" db="EMBL/GenBank/DDBJ databases">
        <title>Gene cloning and expression analysis of sensory neuron membrane protein (SNMP-1) from Helicoverpa assulta.</title>
        <authorList>
            <person name="Zhao Y.Y."/>
            <person name="Luo M.H."/>
            <person name="Qiao Q."/>
        </authorList>
    </citation>
    <scope>NUCLEOTIDE SEQUENCE [MRNA]</scope>
</reference>
<organism>
    <name type="scientific">Helicoverpa assulta</name>
    <name type="common">Oriental tobacco budworm</name>
    <name type="synonym">Heliothis assulta</name>
    <dbReference type="NCBI Taxonomy" id="52344"/>
    <lineage>
        <taxon>Eukaryota</taxon>
        <taxon>Metazoa</taxon>
        <taxon>Ecdysozoa</taxon>
        <taxon>Arthropoda</taxon>
        <taxon>Hexapoda</taxon>
        <taxon>Insecta</taxon>
        <taxon>Pterygota</taxon>
        <taxon>Neoptera</taxon>
        <taxon>Endopterygota</taxon>
        <taxon>Lepidoptera</taxon>
        <taxon>Glossata</taxon>
        <taxon>Ditrysia</taxon>
        <taxon>Noctuoidea</taxon>
        <taxon>Noctuidae</taxon>
        <taxon>Heliothinae</taxon>
        <taxon>Helicoverpa</taxon>
    </lineage>
</organism>